<name>IRF5_HUMAN</name>
<gene>
    <name evidence="17 24" type="primary">IRF5</name>
</gene>
<protein>
    <recommendedName>
        <fullName evidence="17">Interferon regulatory factor 5</fullName>
        <shortName evidence="17">IRF-5</shortName>
    </recommendedName>
</protein>
<accession>Q13568</accession>
<accession>A4D1J8</accession>
<accession>A8DUA8</accession>
<accession>A8DUA9</accession>
<accession>E7EQ16</accession>
<accession>E7EW54</accession>
<accession>Q1A7B4</accession>
<accession>Q64GA9</accession>
<accession>Q64GB1</accession>
<accession>Q64GB2</accession>
<accession>Q6RCM8</accession>
<accession>Q9BQF0</accession>
<organism>
    <name type="scientific">Homo sapiens</name>
    <name type="common">Human</name>
    <dbReference type="NCBI Taxonomy" id="9606"/>
    <lineage>
        <taxon>Eukaryota</taxon>
        <taxon>Metazoa</taxon>
        <taxon>Chordata</taxon>
        <taxon>Craniata</taxon>
        <taxon>Vertebrata</taxon>
        <taxon>Euteleostomi</taxon>
        <taxon>Mammalia</taxon>
        <taxon>Eutheria</taxon>
        <taxon>Euarchontoglires</taxon>
        <taxon>Primates</taxon>
        <taxon>Haplorrhini</taxon>
        <taxon>Catarrhini</taxon>
        <taxon>Hominidae</taxon>
        <taxon>Homo</taxon>
    </lineage>
</organism>
<reference key="1">
    <citation type="journal article" date="2001" name="J. Biol. Chem.">
        <title>Virus-specific activation of a novel interferon regulatory factor, IRF-5, results in the induction of distinct interferon alpha genes.</title>
        <authorList>
            <person name="Barnes B.J."/>
            <person name="Moore P.A."/>
            <person name="Pitha P.M."/>
        </authorList>
    </citation>
    <scope>NUCLEOTIDE SEQUENCE [MRNA] (ISOFORM 4)</scope>
    <scope>FUNCTION</scope>
</reference>
<reference key="2">
    <citation type="journal article" date="2005" name="J. Biol. Chem.">
        <title>The interferon regulatory factor, IRF5, is a central mediator of toll-like receptor 7 signaling.</title>
        <authorList>
            <person name="Schoenemeyer A."/>
            <person name="Barnes B.J."/>
            <person name="Mancl M.E."/>
            <person name="Latz E."/>
            <person name="Goutagny N."/>
            <person name="Pitha P.M."/>
            <person name="Fitzgerald K.A."/>
            <person name="Golenbock D.T."/>
        </authorList>
    </citation>
    <scope>NUCLEOTIDE SEQUENCE [MRNA] (ISOFORM 4)</scope>
    <scope>FUNCTION</scope>
    <scope>SUBCELLULAR LOCATION</scope>
    <scope>PHOSPHORYLATION</scope>
</reference>
<reference key="3">
    <citation type="journal article" date="2005" name="J. Biol. Chem.">
        <title>Two discrete promoters regulate the alternatively spliced human interferon regulatory factor-5 isoforms. Multiple isoforms with distinct cell type-specific expression, localization, regulation, and function.</title>
        <authorList>
            <person name="Mancl M.E."/>
            <person name="Hu G."/>
            <person name="Sangster-Guity N."/>
            <person name="Olshalsky S.L."/>
            <person name="Hoops K."/>
            <person name="Fitzgerald-Bocarsly P."/>
            <person name="Pitha P.M."/>
            <person name="Pinder K."/>
            <person name="Barnes B.J."/>
        </authorList>
    </citation>
    <scope>NUCLEOTIDE SEQUENCE [MRNA] (ISOFORMS 1; 2 AND 5)</scope>
    <scope>ALTERNATIVE SPLICING</scope>
</reference>
<reference key="4">
    <citation type="journal article" date="2006" name="Nat. Genet.">
        <title>A common haplotype of interferon regulatory factor 5 (IRF5) regulates splicing and expression and is associated with increased risk of systemic lupus erythematosus.</title>
        <authorList>
            <person name="Graham R.R."/>
            <person name="Kozyrev S.V."/>
            <person name="Baechler E.C."/>
            <person name="Reddy M.V."/>
            <person name="Plenge R.M."/>
            <person name="Bauer J.W."/>
            <person name="Ortmann W.A."/>
            <person name="Koeuth T."/>
            <person name="Escribano M.F."/>
            <person name="Collaborative Groups T.A."/>
            <person name="Pons-Estel B."/>
            <person name="Petri M."/>
            <person name="Daly M."/>
            <person name="Gregersen P.K."/>
            <person name="Martin J."/>
            <person name="Altshuler D."/>
            <person name="Behrens T.W."/>
            <person name="Alarcon-Riquelme M.E."/>
        </authorList>
    </citation>
    <scope>NUCLEOTIDE SEQUENCE [MRNA] (ISOFORMS 4 AND 6)</scope>
</reference>
<reference key="5">
    <citation type="submission" date="1996-04" db="EMBL/GenBank/DDBJ databases">
        <authorList>
            <person name="Grossman A."/>
            <person name="Mittrucker H.W."/>
            <person name="Lantonio L."/>
            <person name="Mak T.W."/>
        </authorList>
    </citation>
    <scope>NUCLEOTIDE SEQUENCE [MRNA] (ISOFORM 3)</scope>
</reference>
<reference key="6">
    <citation type="submission" date="2006-10" db="EMBL/GenBank/DDBJ databases">
        <authorList>
            <person name="Livingston R.J."/>
            <person name="Shaffer T."/>
            <person name="McFarland I."/>
            <person name="Nguyen C.P."/>
            <person name="Stanaway I.B."/>
            <person name="Rajkumar N."/>
            <person name="Johnson E.J."/>
            <person name="da Ponte S.H."/>
            <person name="Willa H."/>
            <person name="Ahearn M.O."/>
            <person name="Bertucci C."/>
            <person name="Acklestad J."/>
            <person name="Carroll A."/>
            <person name="Swanson J."/>
            <person name="Gildersleeve H.I."/>
            <person name="Nickerson D.A."/>
        </authorList>
    </citation>
    <scope>NUCLEOTIDE SEQUENCE [GENOMIC DNA]</scope>
</reference>
<reference key="7">
    <citation type="journal article" date="2003" name="Nature">
        <title>The DNA sequence of human chromosome 7.</title>
        <authorList>
            <person name="Hillier L.W."/>
            <person name="Fulton R.S."/>
            <person name="Fulton L.A."/>
            <person name="Graves T.A."/>
            <person name="Pepin K.H."/>
            <person name="Wagner-McPherson C."/>
            <person name="Layman D."/>
            <person name="Maas J."/>
            <person name="Jaeger S."/>
            <person name="Walker R."/>
            <person name="Wylie K."/>
            <person name="Sekhon M."/>
            <person name="Becker M.C."/>
            <person name="O'Laughlin M.D."/>
            <person name="Schaller M.E."/>
            <person name="Fewell G.A."/>
            <person name="Delehaunty K.D."/>
            <person name="Miner T.L."/>
            <person name="Nash W.E."/>
            <person name="Cordes M."/>
            <person name="Du H."/>
            <person name="Sun H."/>
            <person name="Edwards J."/>
            <person name="Bradshaw-Cordum H."/>
            <person name="Ali J."/>
            <person name="Andrews S."/>
            <person name="Isak A."/>
            <person name="Vanbrunt A."/>
            <person name="Nguyen C."/>
            <person name="Du F."/>
            <person name="Lamar B."/>
            <person name="Courtney L."/>
            <person name="Kalicki J."/>
            <person name="Ozersky P."/>
            <person name="Bielicki L."/>
            <person name="Scott K."/>
            <person name="Holmes A."/>
            <person name="Harkins R."/>
            <person name="Harris A."/>
            <person name="Strong C.M."/>
            <person name="Hou S."/>
            <person name="Tomlinson C."/>
            <person name="Dauphin-Kohlberg S."/>
            <person name="Kozlowicz-Reilly A."/>
            <person name="Leonard S."/>
            <person name="Rohlfing T."/>
            <person name="Rock S.M."/>
            <person name="Tin-Wollam A.-M."/>
            <person name="Abbott A."/>
            <person name="Minx P."/>
            <person name="Maupin R."/>
            <person name="Strowmatt C."/>
            <person name="Latreille P."/>
            <person name="Miller N."/>
            <person name="Johnson D."/>
            <person name="Murray J."/>
            <person name="Woessner J.P."/>
            <person name="Wendl M.C."/>
            <person name="Yang S.-P."/>
            <person name="Schultz B.R."/>
            <person name="Wallis J.W."/>
            <person name="Spieth J."/>
            <person name="Bieri T.A."/>
            <person name="Nelson J.O."/>
            <person name="Berkowicz N."/>
            <person name="Wohldmann P.E."/>
            <person name="Cook L.L."/>
            <person name="Hickenbotham M.T."/>
            <person name="Eldred J."/>
            <person name="Williams D."/>
            <person name="Bedell J.A."/>
            <person name="Mardis E.R."/>
            <person name="Clifton S.W."/>
            <person name="Chissoe S.L."/>
            <person name="Marra M.A."/>
            <person name="Raymond C."/>
            <person name="Haugen E."/>
            <person name="Gillett W."/>
            <person name="Zhou Y."/>
            <person name="James R."/>
            <person name="Phelps K."/>
            <person name="Iadanoto S."/>
            <person name="Bubb K."/>
            <person name="Simms E."/>
            <person name="Levy R."/>
            <person name="Clendenning J."/>
            <person name="Kaul R."/>
            <person name="Kent W.J."/>
            <person name="Furey T.S."/>
            <person name="Baertsch R.A."/>
            <person name="Brent M.R."/>
            <person name="Keibler E."/>
            <person name="Flicek P."/>
            <person name="Bork P."/>
            <person name="Suyama M."/>
            <person name="Bailey J.A."/>
            <person name="Portnoy M.E."/>
            <person name="Torrents D."/>
            <person name="Chinwalla A.T."/>
            <person name="Gish W.R."/>
            <person name="Eddy S.R."/>
            <person name="McPherson J.D."/>
            <person name="Olson M.V."/>
            <person name="Eichler E.E."/>
            <person name="Green E.D."/>
            <person name="Waterston R.H."/>
            <person name="Wilson R.K."/>
        </authorList>
    </citation>
    <scope>NUCLEOTIDE SEQUENCE [LARGE SCALE GENOMIC DNA]</scope>
</reference>
<reference key="8">
    <citation type="journal article" date="2003" name="Science">
        <title>Human chromosome 7: DNA sequence and biology.</title>
        <authorList>
            <person name="Scherer S.W."/>
            <person name="Cheung J."/>
            <person name="MacDonald J.R."/>
            <person name="Osborne L.R."/>
            <person name="Nakabayashi K."/>
            <person name="Herbrick J.-A."/>
            <person name="Carson A.R."/>
            <person name="Parker-Katiraee L."/>
            <person name="Skaug J."/>
            <person name="Khaja R."/>
            <person name="Zhang J."/>
            <person name="Hudek A.K."/>
            <person name="Li M."/>
            <person name="Haddad M."/>
            <person name="Duggan G.E."/>
            <person name="Fernandez B.A."/>
            <person name="Kanematsu E."/>
            <person name="Gentles S."/>
            <person name="Christopoulos C.C."/>
            <person name="Choufani S."/>
            <person name="Kwasnicka D."/>
            <person name="Zheng X.H."/>
            <person name="Lai Z."/>
            <person name="Nusskern D.R."/>
            <person name="Zhang Q."/>
            <person name="Gu Z."/>
            <person name="Lu F."/>
            <person name="Zeesman S."/>
            <person name="Nowaczyk M.J."/>
            <person name="Teshima I."/>
            <person name="Chitayat D."/>
            <person name="Shuman C."/>
            <person name="Weksberg R."/>
            <person name="Zackai E.H."/>
            <person name="Grebe T.A."/>
            <person name="Cox S.R."/>
            <person name="Kirkpatrick S.J."/>
            <person name="Rahman N."/>
            <person name="Friedman J.M."/>
            <person name="Heng H.H.Q."/>
            <person name="Pelicci P.G."/>
            <person name="Lo-Coco F."/>
            <person name="Belloni E."/>
            <person name="Shaffer L.G."/>
            <person name="Pober B."/>
            <person name="Morton C.C."/>
            <person name="Gusella J.F."/>
            <person name="Bruns G.A.P."/>
            <person name="Korf B.R."/>
            <person name="Quade B.J."/>
            <person name="Ligon A.H."/>
            <person name="Ferguson H."/>
            <person name="Higgins A.W."/>
            <person name="Leach N.T."/>
            <person name="Herrick S.R."/>
            <person name="Lemyre E."/>
            <person name="Farra C.G."/>
            <person name="Kim H.-G."/>
            <person name="Summers A.M."/>
            <person name="Gripp K.W."/>
            <person name="Roberts W."/>
            <person name="Szatmari P."/>
            <person name="Winsor E.J.T."/>
            <person name="Grzeschik K.-H."/>
            <person name="Teebi A."/>
            <person name="Minassian B.A."/>
            <person name="Kere J."/>
            <person name="Armengol L."/>
            <person name="Pujana M.A."/>
            <person name="Estivill X."/>
            <person name="Wilson M.D."/>
            <person name="Koop B.F."/>
            <person name="Tosi S."/>
            <person name="Moore G.E."/>
            <person name="Boright A.P."/>
            <person name="Zlotorynski E."/>
            <person name="Kerem B."/>
            <person name="Kroisel P.M."/>
            <person name="Petek E."/>
            <person name="Oscier D.G."/>
            <person name="Mould S.J."/>
            <person name="Doehner H."/>
            <person name="Doehner K."/>
            <person name="Rommens J.M."/>
            <person name="Vincent J.B."/>
            <person name="Venter J.C."/>
            <person name="Li P.W."/>
            <person name="Mural R.J."/>
            <person name="Adams M.D."/>
            <person name="Tsui L.-C."/>
        </authorList>
    </citation>
    <scope>NUCLEOTIDE SEQUENCE [LARGE SCALE GENOMIC DNA]</scope>
</reference>
<reference key="9">
    <citation type="submission" date="2005-07" db="EMBL/GenBank/DDBJ databases">
        <authorList>
            <person name="Mural R.J."/>
            <person name="Istrail S."/>
            <person name="Sutton G.G."/>
            <person name="Florea L."/>
            <person name="Halpern A.L."/>
            <person name="Mobarry C.M."/>
            <person name="Lippert R."/>
            <person name="Walenz B."/>
            <person name="Shatkay H."/>
            <person name="Dew I."/>
            <person name="Miller J.R."/>
            <person name="Flanigan M.J."/>
            <person name="Edwards N.J."/>
            <person name="Bolanos R."/>
            <person name="Fasulo D."/>
            <person name="Halldorsson B.V."/>
            <person name="Hannenhalli S."/>
            <person name="Turner R."/>
            <person name="Yooseph S."/>
            <person name="Lu F."/>
            <person name="Nusskern D.R."/>
            <person name="Shue B.C."/>
            <person name="Zheng X.H."/>
            <person name="Zhong F."/>
            <person name="Delcher A.L."/>
            <person name="Huson D.H."/>
            <person name="Kravitz S.A."/>
            <person name="Mouchard L."/>
            <person name="Reinert K."/>
            <person name="Remington K.A."/>
            <person name="Clark A.G."/>
            <person name="Waterman M.S."/>
            <person name="Eichler E.E."/>
            <person name="Adams M.D."/>
            <person name="Hunkapiller M.W."/>
            <person name="Myers E.W."/>
            <person name="Venter J.C."/>
        </authorList>
    </citation>
    <scope>NUCLEOTIDE SEQUENCE [LARGE SCALE GENOMIC DNA]</scope>
</reference>
<reference key="10">
    <citation type="journal article" date="2004" name="Genome Res.">
        <title>The status, quality, and expansion of the NIH full-length cDNA project: the Mammalian Gene Collection (MGC).</title>
        <authorList>
            <consortium name="The MGC Project Team"/>
        </authorList>
    </citation>
    <scope>NUCLEOTIDE SEQUENCE [LARGE SCALE MRNA] (ISOFORM 1)</scope>
    <source>
        <tissue>Kidney</tissue>
    </source>
</reference>
<reference key="11">
    <citation type="submission" date="2006-09" db="EMBL/GenBank/DDBJ databases">
        <title>Structural indel variation in IRF5 is associated with a risk haplotype and defines the precise IRF5 isoforms expressed in SLE.</title>
        <authorList>
            <person name="Kozyrev S.V."/>
            <person name="Lewen S."/>
            <person name="Linga-Reddy P.M.V."/>
            <person name="Alarcon-Riquelme M.E."/>
        </authorList>
    </citation>
    <scope>NUCLEOTIDE SEQUENCE [MRNA] OF 130-253 (ISOFORMS 2 AND 3)</scope>
</reference>
<reference key="12">
    <citation type="journal article" date="2002" name="Mol. Cell. Biol.">
        <title>Multiple regulatory domains of IRF-5 control activation, cellular localization, and induction of chemokines that mediate recruitment of T lymphocytes.</title>
        <authorList>
            <person name="Barnes B.J."/>
            <person name="Kellum M.J."/>
            <person name="Field A.E."/>
            <person name="Pitha P.M."/>
        </authorList>
    </citation>
    <scope>SUBCELLULAR LOCATION</scope>
    <scope>NUCLEAR LOCALIZATION SIGNAL</scope>
</reference>
<reference key="13">
    <citation type="journal article" date="2005" name="Am. J. Hum. Genet.">
        <title>Polymorphisms in the tyrosine kinase 2 and interferon regulatory factor 5 genes are associated with systemic lupus erythematosus.</title>
        <authorList>
            <person name="Sigurdsson S."/>
            <person name="Nordmark G."/>
            <person name="Goering H.H.H."/>
            <person name="Lindroos K."/>
            <person name="Wiman A.-C."/>
            <person name="Sturfelt G."/>
            <person name="Joensen A."/>
            <person name="Rantapaeae-Dahlqvist S."/>
            <person name="Moeller B."/>
            <person name="Kere J."/>
            <person name="Koskenmies S."/>
            <person name="Widen E."/>
            <person name="Eloranta M.-L."/>
            <person name="Julkunen H."/>
            <person name="Kristjansdottir H."/>
            <person name="Steinsson K."/>
            <person name="Alm G."/>
            <person name="Roennblom L."/>
            <person name="Syvaenen A.-C."/>
        </authorList>
    </citation>
    <scope>INVOLVEMENT IN SUSCEPTIBILITY TO SLEB10</scope>
</reference>
<reference key="14">
    <citation type="journal article" date="2005" name="J. Biol. Chem.">
        <title>A CRM1-dependent nuclear export pathway is involved in the regulation of IRF-5 subcellular localization.</title>
        <authorList>
            <person name="Lin R."/>
            <person name="Yang L."/>
            <person name="Arguello M."/>
            <person name="Penafuerte C."/>
            <person name="Hiscott J."/>
        </authorList>
    </citation>
    <scope>SUBCELLULAR LOCATION</scope>
    <scope>NUCLEAR EXPORT SIGNAL</scope>
</reference>
<reference key="15">
    <citation type="journal article" date="2007" name="Arthritis Rheum.">
        <title>Association of a haplotype in the promoter region of the interferon regulatory factor 5 gene with rheumatoid arthritis.</title>
        <authorList>
            <person name="Sigurdsson S."/>
            <person name="Padyukov L."/>
            <person name="Kurreeman F.A."/>
            <person name="Liljedahl U."/>
            <person name="Wiman A.C."/>
            <person name="Alfredsson L."/>
            <person name="Toes R."/>
            <person name="Ronnelid J."/>
            <person name="Klareskog L."/>
            <person name="Huizinga T.W."/>
            <person name="Alm G."/>
            <person name="Syvanen A.C."/>
            <person name="Ronnblom L."/>
        </authorList>
    </citation>
    <scope>INVOLVEMENT IN SUSCEPTIBILITY TO RHEUMATOID ARTHRITIS</scope>
</reference>
<reference key="16">
    <citation type="journal article" date="2007" name="Hum. Mol. Genet.">
        <title>An insertion-deletion polymorphism in the interferon regulatory Factor 5 (IRF5) gene confers risk of inflammatory bowel diseases.</title>
        <authorList>
            <person name="Dideberg V."/>
            <person name="Kristjansdottir G."/>
            <person name="Milani L."/>
            <person name="Libioulle C."/>
            <person name="Sigurdsson S."/>
            <person name="Louis E."/>
            <person name="Wiman A.-C."/>
            <person name="Vermeire S."/>
            <person name="Rutgeerts P."/>
            <person name="Belaiche J."/>
            <person name="Franchimont D."/>
            <person name="Van Gossum A."/>
            <person name="Bours V."/>
            <person name="Syvaenen A.-C."/>
        </authorList>
    </citation>
    <scope>INVOLVEMENT IN SUSCEPTIBILITY TO IBD14</scope>
</reference>
<reference key="17">
    <citation type="journal article" date="2008" name="Mol. Cell. Biol.">
        <title>Functional regulation of MyD88-activated interferon regulatory factor 5 by K63-linked polyubiquitination.</title>
        <authorList>
            <person name="Balkhi M.Y."/>
            <person name="Fitzgerald K.A."/>
            <person name="Pitha P.M."/>
        </authorList>
    </citation>
    <scope>UBIQUITINATION AT LYS-411 AND LYS-412 BY TRAF6</scope>
</reference>
<reference key="18">
    <citation type="journal article" date="2012" name="PLoS ONE">
        <title>Activation of interferon regulatory factor 5 by site specific phosphorylation.</title>
        <authorList>
            <person name="Chang Foreman H.C."/>
            <person name="Van Scoy S."/>
            <person name="Cheng T.F."/>
            <person name="Reich N.C."/>
        </authorList>
    </citation>
    <scope>FUNCTION</scope>
    <scope>PHOSPHORYLATION AT THR-10; SER-158; SER-293; SER-301; SER-435 AND SER-446</scope>
    <scope>ACTIVITY REGULATION</scope>
    <scope>SUBCELLULAR LOCATION</scope>
</reference>
<reference key="19">
    <citation type="journal article" date="2014" name="Proc. Natl. Acad. Sci. U.S.A.">
        <title>Protein kinase IKKbeta-catalyzed phosphorylation of IRF5 at Ser462 induces its dimerization and nuclear translocation in myeloid cells.</title>
        <authorList>
            <person name="Lopez-Pelaez M."/>
            <person name="Lamont D.J."/>
            <person name="Peggie M."/>
            <person name="Shpiro N."/>
            <person name="Gray N.S."/>
            <person name="Cohen P."/>
        </authorList>
    </citation>
    <scope>FUNCTION</scope>
    <scope>SUBUNIT</scope>
    <scope>SUBCELLULAR LOCATION</scope>
    <scope>ACTIVITY REGULATION</scope>
    <scope>PHOSPHORYLATION AT SER-446</scope>
    <scope>MUTAGENESIS OF SER-446</scope>
</reference>
<reference key="20">
    <citation type="journal article" date="2020" name="Nature">
        <title>TASL is the SLC15A4-associated adaptor for IRF5 activation by TLR7-9.</title>
        <authorList>
            <person name="Heinz L.X."/>
            <person name="Lee J."/>
            <person name="Kapoor U."/>
            <person name="Kartnig F."/>
            <person name="Sedlyarov V."/>
            <person name="Papakostas K."/>
            <person name="Cesar-Razquin A."/>
            <person name="Essletzbichler P."/>
            <person name="Goldmann U."/>
            <person name="Stefanovic A."/>
            <person name="Bigenzahn J.W."/>
            <person name="Scorzoni S."/>
            <person name="Pizzagalli M.D."/>
            <person name="Bensimon A."/>
            <person name="Mueller A.C."/>
            <person name="King F.J."/>
            <person name="Li J."/>
            <person name="Girardi E."/>
            <person name="Mbow M.L."/>
            <person name="Whitehurst C.E."/>
            <person name="Rebsamen M."/>
            <person name="Superti-Furga G."/>
        </authorList>
    </citation>
    <scope>FUNCTION</scope>
    <scope>INTERACTION WITH TASL</scope>
    <scope>PHOSPHORYLATION</scope>
    <scope>ACTIVITY REGULATION</scope>
</reference>
<reference key="21">
    <citation type="journal article" date="2021" name="Cell Rep.">
        <title>MDA5 Governs the Innate Immune Response to SARS-CoV-2 in Lung Epithelial Cells.</title>
        <authorList>
            <person name="Yin X."/>
            <person name="Riva L."/>
            <person name="Pu Y."/>
            <person name="Martin-Sancho L."/>
            <person name="Kanamune J."/>
            <person name="Yamamoto Y."/>
            <person name="Sakai K."/>
            <person name="Gotoh S."/>
            <person name="Miorin L."/>
            <person name="De Jesus P.D."/>
            <person name="Yang C.C."/>
            <person name="Herbert K.M."/>
            <person name="Yoh S."/>
            <person name="Hultquist J.F."/>
            <person name="Garcia-Sastre A."/>
            <person name="Chanda S.K."/>
        </authorList>
    </citation>
    <scope>FUNCTION</scope>
    <scope>ACTIVITY REGULATION (MICROBIAL INFECTION)</scope>
</reference>
<reference key="22">
    <citation type="journal article" date="2008" name="Nat. Struct. Mol. Biol.">
        <title>Insights into interferon regulatory factor activation from the crystal structure of dimeric IRF5.</title>
        <authorList>
            <person name="Chen W."/>
            <person name="Lam S.S."/>
            <person name="Srinath H."/>
            <person name="Jiang Z."/>
            <person name="Correia J.J."/>
            <person name="Schiffer C.A."/>
            <person name="Fitzgerald K.A."/>
            <person name="Lin K."/>
            <person name="Royer W.E. Jr."/>
        </authorList>
    </citation>
    <scope>X-RAY CRYSTALLOGRAPHY (2.0 ANGSTROMS) OF 232-477 OF MUTANT ASP-440</scope>
    <scope>SUBUNIT</scope>
    <scope>ACTIVITY REGULATION</scope>
    <scope>PHOSPHORYLATION AT SER-435; SER-437; SER-440 AND SER-446</scope>
</reference>
<keyword id="KW-0002">3D-structure</keyword>
<keyword id="KW-0025">Alternative splicing</keyword>
<keyword id="KW-0051">Antiviral defense</keyword>
<keyword id="KW-0963">Cytoplasm</keyword>
<keyword id="KW-0238">DNA-binding</keyword>
<keyword id="KW-0391">Immunity</keyword>
<keyword id="KW-0395">Inflammatory response</keyword>
<keyword id="KW-0399">Innate immunity</keyword>
<keyword id="KW-1017">Isopeptide bond</keyword>
<keyword id="KW-0539">Nucleus</keyword>
<keyword id="KW-0597">Phosphoprotein</keyword>
<keyword id="KW-1267">Proteomics identification</keyword>
<keyword id="KW-1185">Reference proteome</keyword>
<keyword id="KW-0772">Systemic lupus erythematosus</keyword>
<keyword id="KW-0804">Transcription</keyword>
<keyword id="KW-0805">Transcription regulation</keyword>
<keyword id="KW-0832">Ubl conjugation</keyword>
<feature type="chain" id="PRO_0000154558" description="Interferon regulatory factor 5">
    <location>
        <begin position="1"/>
        <end position="498"/>
    </location>
</feature>
<feature type="DNA-binding region" description="IRF tryptophan pentad repeat" evidence="2">
    <location>
        <begin position="14"/>
        <end position="122"/>
    </location>
</feature>
<feature type="region of interest" description="Disordered" evidence="3">
    <location>
        <begin position="121"/>
        <end position="207"/>
    </location>
</feature>
<feature type="region of interest" description="Disordered" evidence="3">
    <location>
        <begin position="478"/>
        <end position="498"/>
    </location>
</feature>
<feature type="short sequence motif" description="Nuclear localization signal" evidence="5">
    <location>
        <begin position="12"/>
        <end position="18"/>
    </location>
</feature>
<feature type="short sequence motif" description="Nuclear export signal" evidence="6">
    <location>
        <begin position="150"/>
        <end position="160"/>
    </location>
</feature>
<feature type="compositionally biased region" description="Pro residues" evidence="3">
    <location>
        <begin position="168"/>
        <end position="206"/>
    </location>
</feature>
<feature type="modified residue" description="Phosphothreonine" evidence="13">
    <location>
        <position position="10"/>
    </location>
</feature>
<feature type="modified residue" description="Phosphoserine; by TBK1" evidence="13">
    <location>
        <position position="158"/>
    </location>
</feature>
<feature type="modified residue" description="Phosphoserine; by TBK1" evidence="13">
    <location>
        <position position="293"/>
    </location>
</feature>
<feature type="modified residue" description="Phosphoserine" evidence="13">
    <location>
        <position position="301"/>
    </location>
</feature>
<feature type="modified residue" description="Phosphoserine" evidence="1">
    <location>
        <position position="431"/>
    </location>
</feature>
<feature type="modified residue" description="Phosphoserine" evidence="12 13">
    <location>
        <position position="435"/>
    </location>
</feature>
<feature type="modified residue" description="Phosphoserine" evidence="12">
    <location>
        <position position="437"/>
    </location>
</feature>
<feature type="modified residue" description="Phosphoserine" evidence="12">
    <location>
        <position position="440"/>
    </location>
</feature>
<feature type="modified residue" description="Phosphoserine; by IKKB" evidence="12 13 14">
    <location>
        <position position="446"/>
    </location>
</feature>
<feature type="cross-link" description="Glycyl lysine isopeptide (Lys-Gly) (interchain with G-Cter in ubiquitin)" evidence="11">
    <location>
        <position position="411"/>
    </location>
</feature>
<feature type="cross-link" description="Glycyl lysine isopeptide (Lys-Gly) (interchain with G-Cter in ubiquitin)" evidence="11">
    <location>
        <position position="412"/>
    </location>
</feature>
<feature type="splice variant" id="VSP_053330" description="In isoform 6." evidence="20">
    <original>VCSNGPAPTDSQPPEDYSFGAGEEEEEE</original>
    <variation>TPSPLRITLLVQERRRKKRKSCRGCCQA</variation>
    <location>
        <begin position="120"/>
        <end position="147"/>
    </location>
</feature>
<feature type="splice variant" id="VSP_053331" description="In isoform 6." evidence="20">
    <location>
        <begin position="148"/>
        <end position="498"/>
    </location>
</feature>
<feature type="splice variant" id="VSP_041375" description="In isoform 2." evidence="19 21">
    <original>T</original>
    <variation>TDAVQSGPHMTPYSLLK</variation>
    <location>
        <position position="160"/>
    </location>
</feature>
<feature type="splice variant" id="VSP_044822" description="In isoform 5." evidence="19">
    <original>EDVKWPPTLQPPTLRPPTLQPPTLQPPVVLGPPAPDPSPLAPPPGNPAGFRELLSEVLEPGPLPASLPPAGEQLLPDLLISPHMLPL</original>
    <variation>V</variation>
    <location>
        <begin position="161"/>
        <end position="247"/>
    </location>
</feature>
<feature type="splice variant" id="VSP_043924" description="In isoform 3." evidence="21 22">
    <original>EDVKWPPTLQPPTLR</original>
    <variation>DAVQSGPHMTPYSLLKEDVKW</variation>
    <location>
        <begin position="161"/>
        <end position="175"/>
    </location>
</feature>
<feature type="splice variant" id="VSP_043925" description="In isoform 4." evidence="17 18 20">
    <location>
        <begin position="166"/>
        <end position="175"/>
    </location>
</feature>
<feature type="mutagenesis site" description="Abolished nuclear translocation." evidence="14">
    <original>S</original>
    <variation>A</variation>
    <location>
        <position position="446"/>
    </location>
</feature>
<feature type="sequence conflict" description="In Ref. 3; AAU12880." evidence="23" ref="3">
    <original>K</original>
    <variation>KK</variation>
    <location>
        <position position="253"/>
    </location>
</feature>
<feature type="helix" evidence="25">
    <location>
        <begin position="235"/>
        <end position="239"/>
    </location>
</feature>
<feature type="turn" evidence="25">
    <location>
        <begin position="242"/>
        <end position="244"/>
    </location>
</feature>
<feature type="strand" evidence="25">
    <location>
        <begin position="250"/>
        <end position="256"/>
    </location>
</feature>
<feature type="strand" evidence="25">
    <location>
        <begin position="262"/>
        <end position="266"/>
    </location>
</feature>
<feature type="strand" evidence="25">
    <location>
        <begin position="272"/>
        <end position="275"/>
    </location>
</feature>
<feature type="helix" evidence="25">
    <location>
        <begin position="283"/>
        <end position="285"/>
    </location>
</feature>
<feature type="helix" evidence="25">
    <location>
        <begin position="286"/>
        <end position="289"/>
    </location>
</feature>
<feature type="strand" evidence="25">
    <location>
        <begin position="294"/>
        <end position="298"/>
    </location>
</feature>
<feature type="helix" evidence="25">
    <location>
        <begin position="308"/>
        <end position="318"/>
    </location>
</feature>
<feature type="strand" evidence="25">
    <location>
        <begin position="325"/>
        <end position="330"/>
    </location>
</feature>
<feature type="strand" evidence="25">
    <location>
        <begin position="333"/>
        <end position="338"/>
    </location>
</feature>
<feature type="strand" evidence="25">
    <location>
        <begin position="340"/>
        <end position="342"/>
    </location>
</feature>
<feature type="strand" evidence="25">
    <location>
        <begin position="344"/>
        <end position="348"/>
    </location>
</feature>
<feature type="strand" evidence="25">
    <location>
        <begin position="367"/>
        <end position="371"/>
    </location>
</feature>
<feature type="helix" evidence="25">
    <location>
        <begin position="372"/>
        <end position="383"/>
    </location>
</feature>
<feature type="strand" evidence="25">
    <location>
        <begin position="395"/>
        <end position="401"/>
    </location>
</feature>
<feature type="helix" evidence="25">
    <location>
        <begin position="409"/>
        <end position="411"/>
    </location>
</feature>
<feature type="strand" evidence="25">
    <location>
        <begin position="413"/>
        <end position="420"/>
    </location>
</feature>
<feature type="helix" evidence="25">
    <location>
        <begin position="421"/>
        <end position="431"/>
    </location>
</feature>
<feature type="helix" evidence="25">
    <location>
        <begin position="450"/>
        <end position="465"/>
    </location>
</feature>
<proteinExistence type="evidence at protein level"/>
<evidence type="ECO:0000250" key="1">
    <source>
        <dbReference type="UniProtKB" id="P56477"/>
    </source>
</evidence>
<evidence type="ECO:0000255" key="2">
    <source>
        <dbReference type="PROSITE-ProRule" id="PRU00840"/>
    </source>
</evidence>
<evidence type="ECO:0000256" key="3">
    <source>
        <dbReference type="SAM" id="MobiDB-lite"/>
    </source>
</evidence>
<evidence type="ECO:0000269" key="4">
    <source>
    </source>
</evidence>
<evidence type="ECO:0000269" key="5">
    <source>
    </source>
</evidence>
<evidence type="ECO:0000269" key="6">
    <source>
    </source>
</evidence>
<evidence type="ECO:0000269" key="7">
    <source>
    </source>
</evidence>
<evidence type="ECO:0000269" key="8">
    <source>
    </source>
</evidence>
<evidence type="ECO:0000269" key="9">
    <source>
    </source>
</evidence>
<evidence type="ECO:0000269" key="10">
    <source>
    </source>
</evidence>
<evidence type="ECO:0000269" key="11">
    <source>
    </source>
</evidence>
<evidence type="ECO:0000269" key="12">
    <source>
    </source>
</evidence>
<evidence type="ECO:0000269" key="13">
    <source>
    </source>
</evidence>
<evidence type="ECO:0000269" key="14">
    <source>
    </source>
</evidence>
<evidence type="ECO:0000269" key="15">
    <source>
    </source>
</evidence>
<evidence type="ECO:0000269" key="16">
    <source>
    </source>
</evidence>
<evidence type="ECO:0000303" key="17">
    <source>
    </source>
</evidence>
<evidence type="ECO:0000303" key="18">
    <source>
    </source>
</evidence>
<evidence type="ECO:0000303" key="19">
    <source>
    </source>
</evidence>
<evidence type="ECO:0000303" key="20">
    <source>
    </source>
</evidence>
<evidence type="ECO:0000303" key="21">
    <source ref="11"/>
</evidence>
<evidence type="ECO:0000303" key="22">
    <source ref="5"/>
</evidence>
<evidence type="ECO:0000305" key="23"/>
<evidence type="ECO:0000312" key="24">
    <source>
        <dbReference type="HGNC" id="HGNC:6120"/>
    </source>
</evidence>
<evidence type="ECO:0007829" key="25">
    <source>
        <dbReference type="PDB" id="3DSH"/>
    </source>
</evidence>
<comment type="function">
    <text evidence="1 4 8 13 14 15 16">Transcription factor that plays a critical role in innate immunity by activating expression of type I interferon (IFN) IFNA and INFB and inflammatory cytokines downstream of endolysosomal toll-like receptors TLR7, TLR8 and TLR9 (PubMed:11303025, PubMed:15695821, PubMed:22412986, PubMed:25326418, PubMed:32433612). Regulates the transcription of type I IFN genes (IFN-alpha and IFN-beta) and IFN-stimulated genes (ISG) by binding to an interferon-stimulated response element (ISRE) in their promoters (By similarity). Can efficiently activate both the IFN-beta (IFNB) and the IFN-alpha (IFNA) genes and mediate their induction downstream of the TLR-activated, MyD88-dependent pathway (By similarity). Key transcription factor regulating the IFN response during SARS-CoV-2 infection (PubMed:33440148).</text>
</comment>
<comment type="activity regulation">
    <text evidence="12 13 14 15">Maintained as a monomer in an autoinhibited state (PubMed:18836453, PubMed:22412986, PubMed:25326418). Phosphorylation and activation follow the following steps: innate adapter protein TASL recruits IRF5, thereby licensing IRF5 for phosphorylation by IKBKB (PubMed:32433612). Phosphorylated IRF5 dissociates from the adapter proteins, dimerizes, and then enters the nucleus to induce IFNs (PubMed:25326418, PubMed:32433612).</text>
</comment>
<comment type="activity regulation">
    <text evidence="16">(Microbial infection) Activated upon coronavirus SARS-CoV-2 infection.</text>
</comment>
<comment type="subunit">
    <text evidence="1 12 14 15">Homodimer, when phosphorylated (PubMed:18836453, PubMed:25326418). Interacts with TASL (via pLxIS motif); interaction takes place downstream of TLR7, TLR8 or TLR9, leading to its activation (PubMed:32433612). Interacts with MYD88 and TRAF6 (By similarity).</text>
</comment>
<comment type="interaction">
    <interactant intactId="EBI-3931258">
        <id>Q13568</id>
    </interactant>
    <interactant intactId="EBI-81215">
        <id>Q92793</id>
        <label>CREBBP</label>
    </interactant>
    <organismsDiffer>false</organismsDiffer>
    <experiments>3</experiments>
</comment>
<comment type="interaction">
    <interactant intactId="EBI-3931258">
        <id>Q13568</id>
    </interactant>
    <interactant intactId="EBI-3931258">
        <id>Q13568</id>
        <label>IRF5</label>
    </interactant>
    <organismsDiffer>false</organismsDiffer>
    <experiments>3</experiments>
</comment>
<comment type="interaction">
    <interactant intactId="EBI-3931258">
        <id>Q13568</id>
    </interactant>
    <interactant intactId="EBI-995373">
        <id>Q7Z434</id>
        <label>MAVS</label>
    </interactant>
    <organismsDiffer>false</organismsDiffer>
    <experiments>2</experiments>
</comment>
<comment type="interaction">
    <interactant intactId="EBI-3931258">
        <id>Q13568</id>
    </interactant>
    <interactant intactId="EBI-73886">
        <id>Q04206</id>
        <label>RELA</label>
    </interactant>
    <organismsDiffer>false</organismsDiffer>
    <experiments>6</experiments>
</comment>
<comment type="interaction">
    <interactant intactId="EBI-3931258">
        <id>Q13568</id>
    </interactant>
    <interactant intactId="EBI-347996">
        <id>O43765</id>
        <label>SGTA</label>
    </interactant>
    <organismsDiffer>false</organismsDiffer>
    <experiments>3</experiments>
</comment>
<comment type="interaction">
    <interactant intactId="EBI-3931258">
        <id>Q13568</id>
    </interactant>
    <interactant intactId="EBI-78139">
        <id>Q13263</id>
        <label>TRIM28</label>
    </interactant>
    <organismsDiffer>false</organismsDiffer>
    <experiments>5</experiments>
</comment>
<comment type="subcellular location">
    <subcellularLocation>
        <location evidence="5 6 8 13 14">Cytoplasm</location>
    </subcellularLocation>
    <subcellularLocation>
        <location evidence="5 6 8 13 14">Nucleus</location>
    </subcellularLocation>
    <text evidence="5 6 8 13 14">Shuttles between the nucleus and the cytoplasm: upon activation by the TLR adapter MYD88 and subsequent phosphorylation, translocates to the nucleus.</text>
</comment>
<comment type="alternative products">
    <event type="alternative splicing"/>
    <isoform>
        <id>Q13568-1</id>
        <name>1</name>
        <sequence type="displayed"/>
    </isoform>
    <isoform>
        <id>Q13568-2</id>
        <name>2</name>
        <sequence type="described" ref="VSP_041375"/>
    </isoform>
    <isoform>
        <id>Q13568-3</id>
        <name>3</name>
        <sequence type="described" ref="VSP_043924"/>
    </isoform>
    <isoform>
        <id>Q13568-4</id>
        <name>4</name>
        <sequence type="described" ref="VSP_043925"/>
    </isoform>
    <isoform>
        <id>Q13568-5</id>
        <name>5</name>
        <sequence type="described" ref="VSP_044822"/>
    </isoform>
    <isoform>
        <id>Q13568-6</id>
        <name>6</name>
        <sequence type="described" ref="VSP_053330 VSP_053331"/>
    </isoform>
</comment>
<comment type="PTM">
    <text evidence="8 12 13 14">Phosphorylation of serine and threonine residues by IKBKB in a C-terminal autoinhibitory region, stimulates dimerization, transport into the nucleus, assembly with the coactivator CBP/EP300 and initiation of transcription.</text>
</comment>
<comment type="PTM">
    <text evidence="11">'Lys-63'-linked polyubiquitination by TRAF6 is required for activation.</text>
</comment>
<comment type="disease" evidence="10">
    <disease id="DI-02656">
        <name>Inflammatory bowel disease 14</name>
        <acronym>IBD14</acronym>
        <description>A chronic, relapsing inflammation of the gastrointestinal tract with a complex etiology. It is subdivided into Crohn disease and ulcerative colitis phenotypes. Crohn disease may affect any part of the gastrointestinal tract from the mouth to the anus, but most frequently it involves the terminal ileum and colon. Bowel inflammation is transmural and discontinuous; it may contain granulomas or be associated with intestinal or perianal fistulas. In contrast, in ulcerative colitis, the inflammation is continuous and limited to rectal and colonic mucosal layers; fistulas and granulomas are not observed. Both diseases include extraintestinal inflammation of the skin, eyes, or joints.</description>
        <dbReference type="MIM" id="612245"/>
    </disease>
    <text>Disease susceptibility is associated with variants affecting the gene represented in this entry.</text>
</comment>
<comment type="disease" evidence="7">
    <disease id="DI-02652">
        <name>Systemic lupus erythematosus 10</name>
        <acronym>SLEB10</acronym>
        <description>A chronic, relapsing, inflammatory, and often febrile multisystemic disorder of connective tissue, characterized principally by involvement of the skin, joints, kidneys and serosal membranes. It is of unknown etiology, but is thought to represent a failure of the regulatory mechanisms of the autoimmune system. The disease is marked by a wide range of system dysfunctions, an elevated erythrocyte sedimentation rate, and the formation of LE cells in the blood or bone marrow.</description>
        <dbReference type="MIM" id="612251"/>
    </disease>
    <text>Disease susceptibility is associated with variants affecting the gene represented in this entry.</text>
</comment>
<comment type="disease" evidence="9">
    <disease id="DI-02692">
        <name>Rheumatoid arthritis</name>
        <acronym>RA</acronym>
        <description>An inflammatory disease with autoimmune features and a complex genetic component. It primarily affects the joints and is characterized by inflammatory changes in the synovial membranes and articular structures, widespread fibrinoid degeneration of the collagen fibers in mesenchymal tissues, and by atrophy and rarefaction of bony structures.</description>
        <dbReference type="MIM" id="180300"/>
    </disease>
    <text>Disease susceptibility is associated with variants affecting the gene represented in this entry.</text>
</comment>
<comment type="similarity">
    <text evidence="2">Belongs to the IRF family.</text>
</comment>
<sequence length="498" mass="56044">MNQSIPVAPTPPRRVRLKPWLVAQVNSCQYPGLQWVNGEKKLFCIPWRHATRHGPSQDGDNTIFKAWAKETGKYTEGVDEADPAKWKANLRCALNKSRDFRLIYDGPRDMPPQPYKIYEVCSNGPAPTDSQPPEDYSFGAGEEEEEEEELQRMLPSLSLTEDVKWPPTLQPPTLRPPTLQPPTLQPPVVLGPPAPDPSPLAPPPGNPAGFRELLSEVLEPGPLPASLPPAGEQLLPDLLISPHMLPLTDLEIKFQYRGRPPRALTISNPHGCRLFYSQLEATQEQVELFGPISLEQVRFPSPEDIPSDKQRFYTNQLLDVLDRGLILQLQGQDLYAIRLCQCKVFWSGPCASAHDSCPNPIQREVKTKLFSLEHFLNELILFQKGQTNTPPPFEIFFCFGEEWPDRKPREKKLITVQVVPVAARLLLEMFSGELSWSADSIRLQISNPDLKDRMVEQFKELHHIWQSQQRLQPVAQAPPGAGLGVGQGPWPMHPAGMQ</sequence>
<dbReference type="EMBL" id="AY504947">
    <property type="protein sequence ID" value="AAR90326.1"/>
    <property type="molecule type" value="mRNA"/>
</dbReference>
<dbReference type="EMBL" id="AY504946">
    <property type="protein sequence ID" value="AAR90325.1"/>
    <property type="molecule type" value="mRNA"/>
</dbReference>
<dbReference type="EMBL" id="AY693665">
    <property type="protein sequence ID" value="AAU12877.1"/>
    <property type="molecule type" value="mRNA"/>
</dbReference>
<dbReference type="EMBL" id="AY693666">
    <property type="protein sequence ID" value="AAU12878.1"/>
    <property type="molecule type" value="mRNA"/>
</dbReference>
<dbReference type="EMBL" id="AY693668">
    <property type="protein sequence ID" value="AAU12880.1"/>
    <property type="molecule type" value="mRNA"/>
</dbReference>
<dbReference type="EMBL" id="DQ277633">
    <property type="protein sequence ID" value="ABB88960.1"/>
    <property type="molecule type" value="mRNA"/>
</dbReference>
<dbReference type="EMBL" id="DQ277634">
    <property type="protein sequence ID" value="ABB88961.1"/>
    <property type="molecule type" value="mRNA"/>
</dbReference>
<dbReference type="EMBL" id="U51127">
    <property type="protein sequence ID" value="AAA96056.1"/>
    <property type="molecule type" value="mRNA"/>
</dbReference>
<dbReference type="EMBL" id="EF064718">
    <property type="protein sequence ID" value="ABK41901.1"/>
    <property type="molecule type" value="Genomic_DNA"/>
</dbReference>
<dbReference type="EMBL" id="AC025594">
    <property type="status" value="NOT_ANNOTATED_CDS"/>
    <property type="molecule type" value="Genomic_DNA"/>
</dbReference>
<dbReference type="EMBL" id="CH236950">
    <property type="protein sequence ID" value="EAL24107.1"/>
    <property type="molecule type" value="Genomic_DNA"/>
</dbReference>
<dbReference type="EMBL" id="CH236950">
    <property type="protein sequence ID" value="EAL24108.1"/>
    <property type="molecule type" value="Genomic_DNA"/>
</dbReference>
<dbReference type="EMBL" id="CH471070">
    <property type="protein sequence ID" value="EAW83703.1"/>
    <property type="molecule type" value="Genomic_DNA"/>
</dbReference>
<dbReference type="EMBL" id="CH471070">
    <property type="protein sequence ID" value="EAW83705.1"/>
    <property type="molecule type" value="Genomic_DNA"/>
</dbReference>
<dbReference type="EMBL" id="BC004201">
    <property type="protein sequence ID" value="AAH04201.1"/>
    <property type="molecule type" value="mRNA"/>
</dbReference>
<dbReference type="EMBL" id="BC004139">
    <property type="protein sequence ID" value="AAH04139.1"/>
    <property type="molecule type" value="mRNA"/>
</dbReference>
<dbReference type="EMBL" id="DQ995495">
    <property type="protein sequence ID" value="ABL96293.1"/>
    <property type="molecule type" value="Genomic_DNA"/>
</dbReference>
<dbReference type="EMBL" id="DQ995496">
    <property type="protein sequence ID" value="ABL96294.1"/>
    <property type="molecule type" value="Genomic_DNA"/>
</dbReference>
<dbReference type="CCDS" id="CCDS43645.1">
    <molecule id="Q13568-2"/>
</dbReference>
<dbReference type="CCDS" id="CCDS56512.1">
    <molecule id="Q13568-5"/>
</dbReference>
<dbReference type="CCDS" id="CCDS5808.1">
    <molecule id="Q13568-1"/>
</dbReference>
<dbReference type="PIR" id="G02474">
    <property type="entry name" value="G02474"/>
</dbReference>
<dbReference type="RefSeq" id="NP_001092097.2">
    <molecule id="Q13568-1"/>
    <property type="nucleotide sequence ID" value="NM_001098627.4"/>
</dbReference>
<dbReference type="RefSeq" id="NP_001092099.1">
    <molecule id="Q13568-2"/>
    <property type="nucleotide sequence ID" value="NM_001098629.3"/>
</dbReference>
<dbReference type="RefSeq" id="NP_001092100.1">
    <molecule id="Q13568-1"/>
    <property type="nucleotide sequence ID" value="NM_001098630.3"/>
</dbReference>
<dbReference type="RefSeq" id="NP_001229381.1">
    <molecule id="Q13568-5"/>
    <property type="nucleotide sequence ID" value="NM_001242452.3"/>
</dbReference>
<dbReference type="RefSeq" id="NP_001334857.1">
    <molecule id="Q13568-2"/>
    <property type="nucleotide sequence ID" value="NM_001347928.2"/>
</dbReference>
<dbReference type="RefSeq" id="NP_001351243.1">
    <molecule id="Q13568-2"/>
    <property type="nucleotide sequence ID" value="NM_001364314.2"/>
</dbReference>
<dbReference type="RefSeq" id="NP_116032.1">
    <molecule id="Q13568-1"/>
    <property type="nucleotide sequence ID" value="NM_032643.5"/>
</dbReference>
<dbReference type="RefSeq" id="XP_005250374.1">
    <property type="nucleotide sequence ID" value="XM_005250317.3"/>
</dbReference>
<dbReference type="RefSeq" id="XP_006716037.1">
    <molecule id="Q13568-2"/>
    <property type="nucleotide sequence ID" value="XM_006715974.3"/>
</dbReference>
<dbReference type="RefSeq" id="XP_011514460.1">
    <molecule id="Q13568-2"/>
    <property type="nucleotide sequence ID" value="XM_011516158.4"/>
</dbReference>
<dbReference type="RefSeq" id="XP_011514461.1">
    <molecule id="Q13568-2"/>
    <property type="nucleotide sequence ID" value="XM_011516159.4"/>
</dbReference>
<dbReference type="RefSeq" id="XP_011514462.1">
    <molecule id="Q13568-2"/>
    <property type="nucleotide sequence ID" value="XM_011516160.2"/>
</dbReference>
<dbReference type="RefSeq" id="XP_011514463.1">
    <property type="nucleotide sequence ID" value="XM_011516161.1"/>
</dbReference>
<dbReference type="RefSeq" id="XP_011514464.1">
    <property type="nucleotide sequence ID" value="XM_011516162.1"/>
</dbReference>
<dbReference type="RefSeq" id="XP_011514465.1">
    <property type="nucleotide sequence ID" value="XM_011516163.2"/>
</dbReference>
<dbReference type="RefSeq" id="XP_011514466.1">
    <property type="nucleotide sequence ID" value="XM_011516164.1"/>
</dbReference>
<dbReference type="RefSeq" id="XP_047276292.1">
    <molecule id="Q13568-2"/>
    <property type="nucleotide sequence ID" value="XM_047420336.1"/>
</dbReference>
<dbReference type="RefSeq" id="XP_047276293.1">
    <molecule id="Q13568-3"/>
    <property type="nucleotide sequence ID" value="XM_047420337.1"/>
</dbReference>
<dbReference type="RefSeq" id="XP_047276294.1">
    <molecule id="Q13568-1"/>
    <property type="nucleotide sequence ID" value="XM_047420338.1"/>
</dbReference>
<dbReference type="RefSeq" id="XP_047276295.1">
    <molecule id="Q13568-1"/>
    <property type="nucleotide sequence ID" value="XM_047420339.1"/>
</dbReference>
<dbReference type="RefSeq" id="XP_047276296.1">
    <molecule id="Q13568-4"/>
    <property type="nucleotide sequence ID" value="XM_047420340.1"/>
</dbReference>
<dbReference type="PDB" id="3DSH">
    <property type="method" value="X-ray"/>
    <property type="resolution" value="2.00 A"/>
    <property type="chains" value="A=232-477"/>
</dbReference>
<dbReference type="PDBsum" id="3DSH"/>
<dbReference type="SMR" id="Q13568"/>
<dbReference type="BioGRID" id="109871">
    <property type="interactions" value="49"/>
</dbReference>
<dbReference type="DIP" id="DIP-46348N"/>
<dbReference type="FunCoup" id="Q13568">
    <property type="interactions" value="1274"/>
</dbReference>
<dbReference type="IntAct" id="Q13568">
    <property type="interactions" value="26"/>
</dbReference>
<dbReference type="MINT" id="Q13568"/>
<dbReference type="STRING" id="9606.ENSP00000418037"/>
<dbReference type="GlyGen" id="Q13568">
    <property type="glycosylation" value="3 sites, 1 O-linked glycan (1 site)"/>
</dbReference>
<dbReference type="iPTMnet" id="Q13568"/>
<dbReference type="PhosphoSitePlus" id="Q13568"/>
<dbReference type="BioMuta" id="IRF5"/>
<dbReference type="DMDM" id="20178305"/>
<dbReference type="jPOST" id="Q13568"/>
<dbReference type="MassIVE" id="Q13568"/>
<dbReference type="PaxDb" id="9606-ENSP00000349770"/>
<dbReference type="PeptideAtlas" id="Q13568"/>
<dbReference type="ProteomicsDB" id="18776"/>
<dbReference type="ProteomicsDB" id="59569">
    <molecule id="Q13568-1"/>
</dbReference>
<dbReference type="ProteomicsDB" id="59570">
    <molecule id="Q13568-2"/>
</dbReference>
<dbReference type="ProteomicsDB" id="59571">
    <molecule id="Q13568-3"/>
</dbReference>
<dbReference type="ProteomicsDB" id="59572">
    <molecule id="Q13568-4"/>
</dbReference>
<dbReference type="ProteomicsDB" id="61205"/>
<dbReference type="ABCD" id="Q13568">
    <property type="antibodies" value="1 sequenced antibody"/>
</dbReference>
<dbReference type="Antibodypedia" id="17820">
    <property type="antibodies" value="634 antibodies from 44 providers"/>
</dbReference>
<dbReference type="DNASU" id="3663"/>
<dbReference type="Ensembl" id="ENST00000357234.10">
    <molecule id="Q13568-2"/>
    <property type="protein sequence ID" value="ENSP00000349770.5"/>
    <property type="gene ID" value="ENSG00000128604.21"/>
</dbReference>
<dbReference type="Ensembl" id="ENST00000402030.6">
    <molecule id="Q13568-1"/>
    <property type="protein sequence ID" value="ENSP00000385352.2"/>
    <property type="gene ID" value="ENSG00000128604.21"/>
</dbReference>
<dbReference type="Ensembl" id="ENST00000465603.5">
    <molecule id="Q13568-6"/>
    <property type="protein sequence ID" value="ENSP00000418534.1"/>
    <property type="gene ID" value="ENSG00000128604.21"/>
</dbReference>
<dbReference type="Ensembl" id="ENST00000473745.5">
    <molecule id="Q13568-1"/>
    <property type="protein sequence ID" value="ENSP00000419149.1"/>
    <property type="gene ID" value="ENSG00000128604.21"/>
</dbReference>
<dbReference type="Ensembl" id="ENST00000477535.5">
    <molecule id="Q13568-5"/>
    <property type="protein sequence ID" value="ENSP00000419950.1"/>
    <property type="gene ID" value="ENSG00000128604.21"/>
</dbReference>
<dbReference type="Ensembl" id="ENST00000489702.6">
    <molecule id="Q13568-2"/>
    <property type="protein sequence ID" value="ENSP00000418037.2"/>
    <property type="gene ID" value="ENSG00000128604.21"/>
</dbReference>
<dbReference type="GeneID" id="3663"/>
<dbReference type="KEGG" id="hsa:3663"/>
<dbReference type="MANE-Select" id="ENST00000357234.10">
    <molecule id="Q13568-2"/>
    <property type="protein sequence ID" value="ENSP00000349770.5"/>
    <property type="RefSeq nucleotide sequence ID" value="NM_001098629.3"/>
    <property type="RefSeq protein sequence ID" value="NP_001092099.1"/>
</dbReference>
<dbReference type="UCSC" id="uc003vog.4">
    <molecule id="Q13568-1"/>
    <property type="organism name" value="human"/>
</dbReference>
<dbReference type="AGR" id="HGNC:6120"/>
<dbReference type="CTD" id="3663"/>
<dbReference type="DisGeNET" id="3663"/>
<dbReference type="GeneCards" id="IRF5"/>
<dbReference type="HGNC" id="HGNC:6120">
    <property type="gene designation" value="IRF5"/>
</dbReference>
<dbReference type="HPA" id="ENSG00000128604">
    <property type="expression patterns" value="Low tissue specificity"/>
</dbReference>
<dbReference type="MalaCards" id="IRF5"/>
<dbReference type="MIM" id="180300">
    <property type="type" value="phenotype"/>
</dbReference>
<dbReference type="MIM" id="607218">
    <property type="type" value="gene"/>
</dbReference>
<dbReference type="MIM" id="612245">
    <property type="type" value="phenotype"/>
</dbReference>
<dbReference type="MIM" id="612251">
    <property type="type" value="phenotype"/>
</dbReference>
<dbReference type="neXtProt" id="NX_Q13568"/>
<dbReference type="OpenTargets" id="ENSG00000128604"/>
<dbReference type="Orphanet" id="220393">
    <property type="disease" value="Diffuse cutaneous systemic sclerosis"/>
</dbReference>
<dbReference type="Orphanet" id="220402">
    <property type="disease" value="Limited cutaneous systemic sclerosis"/>
</dbReference>
<dbReference type="Orphanet" id="186">
    <property type="disease" value="Primary biliary cholangitis"/>
</dbReference>
<dbReference type="Orphanet" id="536">
    <property type="disease" value="Systemic lupus erythematosus"/>
</dbReference>
<dbReference type="PharmGKB" id="PA29919"/>
<dbReference type="VEuPathDB" id="HostDB:ENSG00000128604"/>
<dbReference type="eggNOG" id="ENOG502QSKM">
    <property type="taxonomic scope" value="Eukaryota"/>
</dbReference>
<dbReference type="GeneTree" id="ENSGT00940000159926"/>
<dbReference type="HOGENOM" id="CLU_031544_0_1_1"/>
<dbReference type="InParanoid" id="Q13568"/>
<dbReference type="OMA" id="FQYRGQP"/>
<dbReference type="OrthoDB" id="9856880at2759"/>
<dbReference type="PAN-GO" id="Q13568">
    <property type="GO annotations" value="5 GO annotations based on evolutionary models"/>
</dbReference>
<dbReference type="PhylomeDB" id="Q13568"/>
<dbReference type="TreeFam" id="TF328512"/>
<dbReference type="PathwayCommons" id="Q13568"/>
<dbReference type="Reactome" id="R-HSA-877300">
    <property type="pathway name" value="Interferon gamma signaling"/>
</dbReference>
<dbReference type="Reactome" id="R-HSA-909733">
    <property type="pathway name" value="Interferon alpha/beta signaling"/>
</dbReference>
<dbReference type="Reactome" id="R-HSA-9860276">
    <property type="pathway name" value="SLC15A4:TASL-dependent IRF5 activation"/>
</dbReference>
<dbReference type="SignaLink" id="Q13568"/>
<dbReference type="SIGNOR" id="Q13568"/>
<dbReference type="BioGRID-ORCS" id="3663">
    <property type="hits" value="15 hits in 1175 CRISPR screens"/>
</dbReference>
<dbReference type="EvolutionaryTrace" id="Q13568"/>
<dbReference type="GeneWiki" id="IRF5"/>
<dbReference type="GenomeRNAi" id="3663"/>
<dbReference type="Pharos" id="Q13568">
    <property type="development level" value="Tbio"/>
</dbReference>
<dbReference type="PRO" id="PR:Q13568"/>
<dbReference type="Proteomes" id="UP000005640">
    <property type="component" value="Chromosome 7"/>
</dbReference>
<dbReference type="RNAct" id="Q13568">
    <property type="molecule type" value="protein"/>
</dbReference>
<dbReference type="Bgee" id="ENSG00000128604">
    <property type="expression patterns" value="Expressed in monocyte and 135 other cell types or tissues"/>
</dbReference>
<dbReference type="ExpressionAtlas" id="Q13568">
    <property type="expression patterns" value="baseline and differential"/>
</dbReference>
<dbReference type="GO" id="GO:0000785">
    <property type="term" value="C:chromatin"/>
    <property type="evidence" value="ECO:0000247"/>
    <property type="project" value="NTNU_SB"/>
</dbReference>
<dbReference type="GO" id="GO:0005737">
    <property type="term" value="C:cytoplasm"/>
    <property type="evidence" value="ECO:0000314"/>
    <property type="project" value="UniProtKB"/>
</dbReference>
<dbReference type="GO" id="GO:0005829">
    <property type="term" value="C:cytosol"/>
    <property type="evidence" value="ECO:0000304"/>
    <property type="project" value="Reactome"/>
</dbReference>
<dbReference type="GO" id="GO:0005654">
    <property type="term" value="C:nucleoplasm"/>
    <property type="evidence" value="ECO:0000304"/>
    <property type="project" value="Reactome"/>
</dbReference>
<dbReference type="GO" id="GO:0005634">
    <property type="term" value="C:nucleus"/>
    <property type="evidence" value="ECO:0000314"/>
    <property type="project" value="UniProtKB"/>
</dbReference>
<dbReference type="GO" id="GO:0001228">
    <property type="term" value="F:DNA-binding transcription activator activity, RNA polymerase II-specific"/>
    <property type="evidence" value="ECO:0000314"/>
    <property type="project" value="NTNU_SB"/>
</dbReference>
<dbReference type="GO" id="GO:0000981">
    <property type="term" value="F:DNA-binding transcription factor activity, RNA polymerase II-specific"/>
    <property type="evidence" value="ECO:0000314"/>
    <property type="project" value="UniProtKB"/>
</dbReference>
<dbReference type="GO" id="GO:0042802">
    <property type="term" value="F:identical protein binding"/>
    <property type="evidence" value="ECO:0000353"/>
    <property type="project" value="IntAct"/>
</dbReference>
<dbReference type="GO" id="GO:0019901">
    <property type="term" value="F:protein kinase binding"/>
    <property type="evidence" value="ECO:0000353"/>
    <property type="project" value="UniProtKB"/>
</dbReference>
<dbReference type="GO" id="GO:0120283">
    <property type="term" value="F:protein serine/threonine kinase binding"/>
    <property type="evidence" value="ECO:0000353"/>
    <property type="project" value="BHF-UCL"/>
</dbReference>
<dbReference type="GO" id="GO:0000978">
    <property type="term" value="F:RNA polymerase II cis-regulatory region sequence-specific DNA binding"/>
    <property type="evidence" value="ECO:0000318"/>
    <property type="project" value="GO_Central"/>
</dbReference>
<dbReference type="GO" id="GO:0043565">
    <property type="term" value="F:sequence-specific DNA binding"/>
    <property type="evidence" value="ECO:0000315"/>
    <property type="project" value="NTNU_SB"/>
</dbReference>
<dbReference type="GO" id="GO:1990837">
    <property type="term" value="F:sequence-specific double-stranded DNA binding"/>
    <property type="evidence" value="ECO:0000314"/>
    <property type="project" value="ARUK-UCL"/>
</dbReference>
<dbReference type="GO" id="GO:0071225">
    <property type="term" value="P:cellular response to muramyl dipeptide"/>
    <property type="evidence" value="ECO:0000314"/>
    <property type="project" value="BHF-UCL"/>
</dbReference>
<dbReference type="GO" id="GO:0071224">
    <property type="term" value="P:cellular response to peptidoglycan"/>
    <property type="evidence" value="ECO:0000314"/>
    <property type="project" value="BHF-UCL"/>
</dbReference>
<dbReference type="GO" id="GO:0098586">
    <property type="term" value="P:cellular response to virus"/>
    <property type="evidence" value="ECO:0000314"/>
    <property type="project" value="ARUK-UCL"/>
</dbReference>
<dbReference type="GO" id="GO:0019221">
    <property type="term" value="P:cytokine-mediated signaling pathway"/>
    <property type="evidence" value="ECO:0000314"/>
    <property type="project" value="UniProtKB"/>
</dbReference>
<dbReference type="GO" id="GO:0051607">
    <property type="term" value="P:defense response to virus"/>
    <property type="evidence" value="ECO:0007669"/>
    <property type="project" value="UniProtKB-KW"/>
</dbReference>
<dbReference type="GO" id="GO:0002376">
    <property type="term" value="P:immune system process"/>
    <property type="evidence" value="ECO:0000318"/>
    <property type="project" value="GO_Central"/>
</dbReference>
<dbReference type="GO" id="GO:0006954">
    <property type="term" value="P:inflammatory response"/>
    <property type="evidence" value="ECO:0007669"/>
    <property type="project" value="UniProtKB-KW"/>
</dbReference>
<dbReference type="GO" id="GO:0045087">
    <property type="term" value="P:innate immune response"/>
    <property type="evidence" value="ECO:0000250"/>
    <property type="project" value="UniProtKB"/>
</dbReference>
<dbReference type="GO" id="GO:0070431">
    <property type="term" value="P:nucleotide-binding oligomerization domain containing 2 signaling pathway"/>
    <property type="evidence" value="ECO:0000314"/>
    <property type="project" value="BHF-UCL"/>
</dbReference>
<dbReference type="GO" id="GO:0043065">
    <property type="term" value="P:positive regulation of apoptotic process"/>
    <property type="evidence" value="ECO:0000315"/>
    <property type="project" value="BHF-UCL"/>
</dbReference>
<dbReference type="GO" id="GO:0002720">
    <property type="term" value="P:positive regulation of cytokine production involved in immune response"/>
    <property type="evidence" value="ECO:0000314"/>
    <property type="project" value="ARUK-UCL"/>
</dbReference>
<dbReference type="GO" id="GO:0032727">
    <property type="term" value="P:positive regulation of interferon-alpha production"/>
    <property type="evidence" value="ECO:0000314"/>
    <property type="project" value="BHF-UCL"/>
</dbReference>
<dbReference type="GO" id="GO:0032728">
    <property type="term" value="P:positive regulation of interferon-beta production"/>
    <property type="evidence" value="ECO:0000314"/>
    <property type="project" value="BHF-UCL"/>
</dbReference>
<dbReference type="GO" id="GO:0032735">
    <property type="term" value="P:positive regulation of interleukin-12 production"/>
    <property type="evidence" value="ECO:0000314"/>
    <property type="project" value="BHF-UCL"/>
</dbReference>
<dbReference type="GO" id="GO:0045944">
    <property type="term" value="P:positive regulation of transcription by RNA polymerase II"/>
    <property type="evidence" value="ECO:0000314"/>
    <property type="project" value="UniProtKB"/>
</dbReference>
<dbReference type="GO" id="GO:0032481">
    <property type="term" value="P:positive regulation of type I interferon production"/>
    <property type="evidence" value="ECO:0000314"/>
    <property type="project" value="UniProtKB"/>
</dbReference>
<dbReference type="GO" id="GO:0006357">
    <property type="term" value="P:regulation of transcription by RNA polymerase II"/>
    <property type="evidence" value="ECO:0000318"/>
    <property type="project" value="GO_Central"/>
</dbReference>
<dbReference type="CDD" id="cd00103">
    <property type="entry name" value="IRF"/>
    <property type="match status" value="1"/>
</dbReference>
<dbReference type="DisProt" id="DP01907"/>
<dbReference type="FunFam" id="2.60.200.10:FF:000003">
    <property type="entry name" value="Interferon regulatory factor 5"/>
    <property type="match status" value="1"/>
</dbReference>
<dbReference type="FunFam" id="1.10.10.10:FF:000093">
    <property type="entry name" value="Putative interferon regulatory factor 6"/>
    <property type="match status" value="1"/>
</dbReference>
<dbReference type="Gene3D" id="2.60.200.10">
    <property type="match status" value="1"/>
</dbReference>
<dbReference type="Gene3D" id="1.10.10.10">
    <property type="entry name" value="Winged helix-like DNA-binding domain superfamily/Winged helix DNA-binding domain"/>
    <property type="match status" value="1"/>
</dbReference>
<dbReference type="IDEAL" id="IID00471"/>
<dbReference type="InterPro" id="IPR019817">
    <property type="entry name" value="Interferon_reg_fac_CS"/>
</dbReference>
<dbReference type="InterPro" id="IPR001346">
    <property type="entry name" value="Interferon_reg_fact_DNA-bd_dom"/>
</dbReference>
<dbReference type="InterPro" id="IPR019471">
    <property type="entry name" value="Interferon_reg_factor-3"/>
</dbReference>
<dbReference type="InterPro" id="IPR017855">
    <property type="entry name" value="SMAD-like_dom_sf"/>
</dbReference>
<dbReference type="InterPro" id="IPR008984">
    <property type="entry name" value="SMAD_FHA_dom_sf"/>
</dbReference>
<dbReference type="InterPro" id="IPR036388">
    <property type="entry name" value="WH-like_DNA-bd_sf"/>
</dbReference>
<dbReference type="InterPro" id="IPR036390">
    <property type="entry name" value="WH_DNA-bd_sf"/>
</dbReference>
<dbReference type="PANTHER" id="PTHR11949">
    <property type="entry name" value="INTERFERON REGULATORY FACTOR"/>
    <property type="match status" value="1"/>
</dbReference>
<dbReference type="PANTHER" id="PTHR11949:SF10">
    <property type="entry name" value="INTERFERON REGULATORY FACTOR 5"/>
    <property type="match status" value="1"/>
</dbReference>
<dbReference type="Pfam" id="PF00605">
    <property type="entry name" value="IRF"/>
    <property type="match status" value="1"/>
</dbReference>
<dbReference type="Pfam" id="PF10401">
    <property type="entry name" value="IRF-3"/>
    <property type="match status" value="1"/>
</dbReference>
<dbReference type="PRINTS" id="PR00267">
    <property type="entry name" value="INTFRNREGFCT"/>
</dbReference>
<dbReference type="SMART" id="SM00348">
    <property type="entry name" value="IRF"/>
    <property type="match status" value="1"/>
</dbReference>
<dbReference type="SMART" id="SM01243">
    <property type="entry name" value="IRF-3"/>
    <property type="match status" value="1"/>
</dbReference>
<dbReference type="SUPFAM" id="SSF49879">
    <property type="entry name" value="SMAD/FHA domain"/>
    <property type="match status" value="1"/>
</dbReference>
<dbReference type="SUPFAM" id="SSF46785">
    <property type="entry name" value="Winged helix' DNA-binding domain"/>
    <property type="match status" value="1"/>
</dbReference>
<dbReference type="PROSITE" id="PS00601">
    <property type="entry name" value="IRF_1"/>
    <property type="match status" value="1"/>
</dbReference>
<dbReference type="PROSITE" id="PS51507">
    <property type="entry name" value="IRF_2"/>
    <property type="match status" value="1"/>
</dbReference>